<organism>
    <name type="scientific">Aeromonas salmonicida</name>
    <dbReference type="NCBI Taxonomy" id="645"/>
    <lineage>
        <taxon>Bacteria</taxon>
        <taxon>Pseudomonadati</taxon>
        <taxon>Pseudomonadota</taxon>
        <taxon>Gammaproteobacteria</taxon>
        <taxon>Aeromonadales</taxon>
        <taxon>Aeromonadaceae</taxon>
        <taxon>Aeromonas</taxon>
    </lineage>
</organism>
<evidence type="ECO:0000255" key="1">
    <source>
        <dbReference type="HAMAP-Rule" id="MF_01301"/>
    </source>
</evidence>
<evidence type="ECO:0000305" key="2"/>
<keyword id="KW-0998">Cell outer membrane</keyword>
<keyword id="KW-0406">Ion transport</keyword>
<keyword id="KW-0472">Membrane</keyword>
<keyword id="KW-0626">Porin</keyword>
<keyword id="KW-0732">Signal</keyword>
<keyword id="KW-0762">Sugar transport</keyword>
<keyword id="KW-0812">Transmembrane</keyword>
<keyword id="KW-1134">Transmembrane beta strand</keyword>
<keyword id="KW-0813">Transport</keyword>
<comment type="function">
    <text evidence="1">Involved in the transport of maltose and maltodextrins.</text>
</comment>
<comment type="catalytic activity">
    <reaction evidence="1">
        <text>beta-maltose(in) = beta-maltose(out)</text>
        <dbReference type="Rhea" id="RHEA:29731"/>
        <dbReference type="ChEBI" id="CHEBI:18147"/>
    </reaction>
</comment>
<comment type="subunit">
    <text evidence="1">Homotrimer formed of three 18-stranded antiparallel beta-barrels, containing three independent channels.</text>
</comment>
<comment type="subcellular location">
    <subcellularLocation>
        <location evidence="1">Cell outer membrane</location>
        <topology evidence="1">Multi-pass membrane protein</topology>
    </subcellularLocation>
</comment>
<comment type="induction">
    <text evidence="1">By maltose.</text>
</comment>
<comment type="similarity">
    <text evidence="1 2">Belongs to the porin LamB (TC 1.B.3) family.</text>
</comment>
<comment type="caution">
    <text evidence="2">It is uncertain whether Met-1 or Met-3 is the initiator.</text>
</comment>
<reference key="1">
    <citation type="journal article" date="1993" name="FEMS Microbiol. Lett.">
        <title>Molecular cloning and nucleotide sequence analysis of the maltose-inducible porin gene of Aeromonas salmonicida.</title>
        <authorList>
            <person name="Dodsworth S.J."/>
            <person name="Bennett A.J."/>
            <person name="Coleman G."/>
        </authorList>
    </citation>
    <scope>NUCLEOTIDE SEQUENCE [GENOMIC DNA]</scope>
    <source>
        <strain>Unilever 2862</strain>
    </source>
</reference>
<accession>Q44287</accession>
<accession>Q44288</accession>
<dbReference type="EMBL" id="X69464">
    <property type="protein sequence ID" value="CAA49223.1"/>
    <property type="molecule type" value="Genomic_DNA"/>
</dbReference>
<dbReference type="EMBL" id="X69464">
    <property type="protein sequence ID" value="CAA49224.1"/>
    <property type="molecule type" value="Genomic_DNA"/>
</dbReference>
<dbReference type="PIR" id="S37779">
    <property type="entry name" value="S37779"/>
</dbReference>
<dbReference type="SMR" id="Q44287"/>
<dbReference type="STRING" id="1233098.GCA_000315855_03432"/>
<dbReference type="GO" id="GO:0009279">
    <property type="term" value="C:cell outer membrane"/>
    <property type="evidence" value="ECO:0007669"/>
    <property type="project" value="UniProtKB-SubCell"/>
</dbReference>
<dbReference type="GO" id="GO:0046930">
    <property type="term" value="C:pore complex"/>
    <property type="evidence" value="ECO:0007669"/>
    <property type="project" value="UniProtKB-KW"/>
</dbReference>
<dbReference type="GO" id="GO:0042958">
    <property type="term" value="F:maltodextrin transmembrane transporter activity"/>
    <property type="evidence" value="ECO:0007669"/>
    <property type="project" value="InterPro"/>
</dbReference>
<dbReference type="GO" id="GO:0015481">
    <property type="term" value="F:maltose transporting porin activity"/>
    <property type="evidence" value="ECO:0007669"/>
    <property type="project" value="InterPro"/>
</dbReference>
<dbReference type="GO" id="GO:0006811">
    <property type="term" value="P:monoatomic ion transport"/>
    <property type="evidence" value="ECO:0007669"/>
    <property type="project" value="UniProtKB-KW"/>
</dbReference>
<dbReference type="CDD" id="cd01346">
    <property type="entry name" value="Maltoporin-like"/>
    <property type="match status" value="1"/>
</dbReference>
<dbReference type="Gene3D" id="2.40.170.10">
    <property type="entry name" value="Porin, LamB type"/>
    <property type="match status" value="1"/>
</dbReference>
<dbReference type="HAMAP" id="MF_01301">
    <property type="entry name" value="LamB"/>
    <property type="match status" value="1"/>
</dbReference>
<dbReference type="InterPro" id="IPR050286">
    <property type="entry name" value="G_neg_Bact_CarbUptk_Porin"/>
</dbReference>
<dbReference type="InterPro" id="IPR023738">
    <property type="entry name" value="Maltoporin"/>
</dbReference>
<dbReference type="InterPro" id="IPR003192">
    <property type="entry name" value="Porin_LamB"/>
</dbReference>
<dbReference type="InterPro" id="IPR036998">
    <property type="entry name" value="Porin_LamB_sf"/>
</dbReference>
<dbReference type="NCBIfam" id="NF006860">
    <property type="entry name" value="PRK09360.1"/>
    <property type="match status" value="1"/>
</dbReference>
<dbReference type="PANTHER" id="PTHR38762">
    <property type="entry name" value="CRYPTIC OUTER MEMBRANE PORIN BGLH-RELATED"/>
    <property type="match status" value="1"/>
</dbReference>
<dbReference type="PANTHER" id="PTHR38762:SF1">
    <property type="entry name" value="CRYPTIC OUTER MEMBRANE PORIN BGLH-RELATED"/>
    <property type="match status" value="1"/>
</dbReference>
<dbReference type="Pfam" id="PF02264">
    <property type="entry name" value="LamB"/>
    <property type="match status" value="1"/>
</dbReference>
<dbReference type="SUPFAM" id="SSF56935">
    <property type="entry name" value="Porins"/>
    <property type="match status" value="1"/>
</dbReference>
<sequence>MKMKAKWLPIAAGVTAALASQAAFAVDFHGYFRSGVGVSTDGSMQTGLSDNAKQKVGRLGNEADTYGEIQLGSEVFNKDGKTFYVDSMVAMTSNGSNDWESTESKFQCTSANGTALDGCENKEDATFALRQFNVQAKGLLGFAPEATLWAGKRYYQRHDVHISDFYYWNISGRGAGIEGIQAGPGKVSFAWVRNDRSGTNVDGTYNDEMNVNTLDLRYAGIPLWQDGSLEVGVDYAIANPSDAQKDSANAQYKNAKDGVMLTAELTQGILGGFNKTVLQYGTEGYSKTFAFWGDRSWYGAEAKDGADGFRIINHGVIPMGNSWEMGHQLVYGVGNDMWDTNDKWETMSVVARPMYKWDDFNKTIFEGGYFKDKNKSTNGTSEEDAGYKLTLAQAWSAGSSFWARPEIRVFASYLAQDKKEMKGNAFNNGTADDTWNFGVQAEAWW</sequence>
<name>LAMB_AERSA</name>
<protein>
    <recommendedName>
        <fullName evidence="1">Maltoporin</fullName>
    </recommendedName>
    <alternativeName>
        <fullName evidence="1">Maltose-inducible porin</fullName>
    </alternativeName>
</protein>
<feature type="signal peptide" evidence="1">
    <location>
        <begin position="1"/>
        <end position="25"/>
    </location>
</feature>
<feature type="chain" id="PRO_0000025174" description="Maltoporin" evidence="1">
    <location>
        <begin position="26"/>
        <end position="445"/>
    </location>
</feature>
<feature type="site" description="Greasy slide, important in sugar transport" evidence="1">
    <location>
        <position position="31"/>
    </location>
</feature>
<feature type="site" description="Greasy slide, important in sugar transport" evidence="1">
    <location>
        <position position="66"/>
    </location>
</feature>
<feature type="site" description="Greasy slide, important in sugar transport" evidence="1">
    <location>
        <position position="99"/>
    </location>
</feature>
<feature type="site" description="Important in sugar transport" evidence="1">
    <location>
        <position position="166"/>
    </location>
</feature>
<feature type="site" description="Greasy slide, important in sugar transport" evidence="1">
    <location>
        <position position="273"/>
    </location>
</feature>
<feature type="site" description="Greasy slide, important in sugar transport" evidence="1">
    <location>
        <position position="402"/>
    </location>
</feature>
<feature type="site" description="Greasy slide, important in sugar transport" evidence="1">
    <location>
        <position position="444"/>
    </location>
</feature>
<proteinExistence type="inferred from homology"/>
<gene>
    <name evidence="1" type="primary">lamB</name>
</gene>